<protein>
    <recommendedName>
        <fullName>Multiple epidermal growth factor-like domains protein 11</fullName>
        <shortName>Multiple EGF-like domains protein 11</shortName>
    </recommendedName>
</protein>
<reference key="1">
    <citation type="journal article" date="2003" name="DNA Res.">
        <title>Prediction of the coding sequences of mouse homologues of KIAA gene: II. The complete nucleotide sequences of 400 mouse KIAA-homologous cDNAs identified by screening of terminal sequences of cDNA clones randomly sampled from size-fractionated libraries.</title>
        <authorList>
            <person name="Okazaki N."/>
            <person name="Kikuno R."/>
            <person name="Ohara R."/>
            <person name="Inamoto S."/>
            <person name="Aizawa H."/>
            <person name="Yuasa S."/>
            <person name="Nakajima D."/>
            <person name="Nagase T."/>
            <person name="Ohara O."/>
            <person name="Koga H."/>
        </authorList>
    </citation>
    <scope>NUCLEOTIDE SEQUENCE [LARGE SCALE MRNA] (ISOFORM 1)</scope>
    <source>
        <tissue>Brain</tissue>
    </source>
</reference>
<reference key="2">
    <citation type="journal article" date="2005" name="Science">
        <title>The transcriptional landscape of the mammalian genome.</title>
        <authorList>
            <person name="Carninci P."/>
            <person name="Kasukawa T."/>
            <person name="Katayama S."/>
            <person name="Gough J."/>
            <person name="Frith M.C."/>
            <person name="Maeda N."/>
            <person name="Oyama R."/>
            <person name="Ravasi T."/>
            <person name="Lenhard B."/>
            <person name="Wells C."/>
            <person name="Kodzius R."/>
            <person name="Shimokawa K."/>
            <person name="Bajic V.B."/>
            <person name="Brenner S.E."/>
            <person name="Batalov S."/>
            <person name="Forrest A.R."/>
            <person name="Zavolan M."/>
            <person name="Davis M.J."/>
            <person name="Wilming L.G."/>
            <person name="Aidinis V."/>
            <person name="Allen J.E."/>
            <person name="Ambesi-Impiombato A."/>
            <person name="Apweiler R."/>
            <person name="Aturaliya R.N."/>
            <person name="Bailey T.L."/>
            <person name="Bansal M."/>
            <person name="Baxter L."/>
            <person name="Beisel K.W."/>
            <person name="Bersano T."/>
            <person name="Bono H."/>
            <person name="Chalk A.M."/>
            <person name="Chiu K.P."/>
            <person name="Choudhary V."/>
            <person name="Christoffels A."/>
            <person name="Clutterbuck D.R."/>
            <person name="Crowe M.L."/>
            <person name="Dalla E."/>
            <person name="Dalrymple B.P."/>
            <person name="de Bono B."/>
            <person name="Della Gatta G."/>
            <person name="di Bernardo D."/>
            <person name="Down T."/>
            <person name="Engstrom P."/>
            <person name="Fagiolini M."/>
            <person name="Faulkner G."/>
            <person name="Fletcher C.F."/>
            <person name="Fukushima T."/>
            <person name="Furuno M."/>
            <person name="Futaki S."/>
            <person name="Gariboldi M."/>
            <person name="Georgii-Hemming P."/>
            <person name="Gingeras T.R."/>
            <person name="Gojobori T."/>
            <person name="Green R.E."/>
            <person name="Gustincich S."/>
            <person name="Harbers M."/>
            <person name="Hayashi Y."/>
            <person name="Hensch T.K."/>
            <person name="Hirokawa N."/>
            <person name="Hill D."/>
            <person name="Huminiecki L."/>
            <person name="Iacono M."/>
            <person name="Ikeo K."/>
            <person name="Iwama A."/>
            <person name="Ishikawa T."/>
            <person name="Jakt M."/>
            <person name="Kanapin A."/>
            <person name="Katoh M."/>
            <person name="Kawasawa Y."/>
            <person name="Kelso J."/>
            <person name="Kitamura H."/>
            <person name="Kitano H."/>
            <person name="Kollias G."/>
            <person name="Krishnan S.P."/>
            <person name="Kruger A."/>
            <person name="Kummerfeld S.K."/>
            <person name="Kurochkin I.V."/>
            <person name="Lareau L.F."/>
            <person name="Lazarevic D."/>
            <person name="Lipovich L."/>
            <person name="Liu J."/>
            <person name="Liuni S."/>
            <person name="McWilliam S."/>
            <person name="Madan Babu M."/>
            <person name="Madera M."/>
            <person name="Marchionni L."/>
            <person name="Matsuda H."/>
            <person name="Matsuzawa S."/>
            <person name="Miki H."/>
            <person name="Mignone F."/>
            <person name="Miyake S."/>
            <person name="Morris K."/>
            <person name="Mottagui-Tabar S."/>
            <person name="Mulder N."/>
            <person name="Nakano N."/>
            <person name="Nakauchi H."/>
            <person name="Ng P."/>
            <person name="Nilsson R."/>
            <person name="Nishiguchi S."/>
            <person name="Nishikawa S."/>
            <person name="Nori F."/>
            <person name="Ohara O."/>
            <person name="Okazaki Y."/>
            <person name="Orlando V."/>
            <person name="Pang K.C."/>
            <person name="Pavan W.J."/>
            <person name="Pavesi G."/>
            <person name="Pesole G."/>
            <person name="Petrovsky N."/>
            <person name="Piazza S."/>
            <person name="Reed J."/>
            <person name="Reid J.F."/>
            <person name="Ring B.Z."/>
            <person name="Ringwald M."/>
            <person name="Rost B."/>
            <person name="Ruan Y."/>
            <person name="Salzberg S.L."/>
            <person name="Sandelin A."/>
            <person name="Schneider C."/>
            <person name="Schoenbach C."/>
            <person name="Sekiguchi K."/>
            <person name="Semple C.A."/>
            <person name="Seno S."/>
            <person name="Sessa L."/>
            <person name="Sheng Y."/>
            <person name="Shibata Y."/>
            <person name="Shimada H."/>
            <person name="Shimada K."/>
            <person name="Silva D."/>
            <person name="Sinclair B."/>
            <person name="Sperling S."/>
            <person name="Stupka E."/>
            <person name="Sugiura K."/>
            <person name="Sultana R."/>
            <person name="Takenaka Y."/>
            <person name="Taki K."/>
            <person name="Tammoja K."/>
            <person name="Tan S.L."/>
            <person name="Tang S."/>
            <person name="Taylor M.S."/>
            <person name="Tegner J."/>
            <person name="Teichmann S.A."/>
            <person name="Ueda H.R."/>
            <person name="van Nimwegen E."/>
            <person name="Verardo R."/>
            <person name="Wei C.L."/>
            <person name="Yagi K."/>
            <person name="Yamanishi H."/>
            <person name="Zabarovsky E."/>
            <person name="Zhu S."/>
            <person name="Zimmer A."/>
            <person name="Hide W."/>
            <person name="Bult C."/>
            <person name="Grimmond S.M."/>
            <person name="Teasdale R.D."/>
            <person name="Liu E.T."/>
            <person name="Brusic V."/>
            <person name="Quackenbush J."/>
            <person name="Wahlestedt C."/>
            <person name="Mattick J.S."/>
            <person name="Hume D.A."/>
            <person name="Kai C."/>
            <person name="Sasaki D."/>
            <person name="Tomaru Y."/>
            <person name="Fukuda S."/>
            <person name="Kanamori-Katayama M."/>
            <person name="Suzuki M."/>
            <person name="Aoki J."/>
            <person name="Arakawa T."/>
            <person name="Iida J."/>
            <person name="Imamura K."/>
            <person name="Itoh M."/>
            <person name="Kato T."/>
            <person name="Kawaji H."/>
            <person name="Kawagashira N."/>
            <person name="Kawashima T."/>
            <person name="Kojima M."/>
            <person name="Kondo S."/>
            <person name="Konno H."/>
            <person name="Nakano K."/>
            <person name="Ninomiya N."/>
            <person name="Nishio T."/>
            <person name="Okada M."/>
            <person name="Plessy C."/>
            <person name="Shibata K."/>
            <person name="Shiraki T."/>
            <person name="Suzuki S."/>
            <person name="Tagami M."/>
            <person name="Waki K."/>
            <person name="Watahiki A."/>
            <person name="Okamura-Oho Y."/>
            <person name="Suzuki H."/>
            <person name="Kawai J."/>
            <person name="Hayashizaki Y."/>
        </authorList>
    </citation>
    <scope>NUCLEOTIDE SEQUENCE [LARGE SCALE MRNA] (ISOFORMS 2 AND 3)</scope>
    <scope>NUCLEOTIDE SEQUENCE [LARGE SCALE MRNA] OF 634-1091 (ISOFORM 4)</scope>
    <source>
        <strain>C57BL/6J</strain>
        <tissue>Cerebellum</tissue>
        <tissue>Spinal ganglion</tissue>
    </source>
</reference>
<reference key="3">
    <citation type="journal article" date="2012" name="Nature">
        <title>MEGF10 and MEGF11 mediate homotypic interactions required for mosaic spacing of retinal neurons.</title>
        <authorList>
            <person name="Kay J.N."/>
            <person name="Chu M.W."/>
            <person name="Sanes J.R."/>
        </authorList>
    </citation>
    <scope>FUNCTION IN NEURONAL MOSAIC SPACING</scope>
</reference>
<organism>
    <name type="scientific">Mus musculus</name>
    <name type="common">Mouse</name>
    <dbReference type="NCBI Taxonomy" id="10090"/>
    <lineage>
        <taxon>Eukaryota</taxon>
        <taxon>Metazoa</taxon>
        <taxon>Chordata</taxon>
        <taxon>Craniata</taxon>
        <taxon>Vertebrata</taxon>
        <taxon>Euteleostomi</taxon>
        <taxon>Mammalia</taxon>
        <taxon>Eutheria</taxon>
        <taxon>Euarchontoglires</taxon>
        <taxon>Glires</taxon>
        <taxon>Rodentia</taxon>
        <taxon>Myomorpha</taxon>
        <taxon>Muroidea</taxon>
        <taxon>Muridae</taxon>
        <taxon>Murinae</taxon>
        <taxon>Mus</taxon>
        <taxon>Mus</taxon>
    </lineage>
</organism>
<sequence length="1091" mass="116059">MAPSAVGLLVFLLQAALALNPEDPNVCSHWESYAVTVQESYAHPFDQIYYTRCADILNWFKCTRHRISYKTAYRRGLRTMYRRRSQCCPGYYENGDFCIPLCTEECMHGRCVSPDTCHCEPGWGGPDCSSGCDSEHWGPHCSNRCQCQNGALCNPITGACVCAPGFRGWRCEELCAPGTHGKGCQLLCQCHHGASCDPRTGECLCAPGYTGVYCEELCPPGSHGAHCELRCPCQNGGTCHHITGECACPPGWTGAVCAQPCPPGTFGQNCSQDCPCHHGGQCDHVTGQCHCTAGYMGDRCQEECPFGTFGFLCSQRCDCHNGGQCSPATGACECEPGYKGPSCQERLCPEGLHGPGCTLPCPCDTENTISCHPVTGACTCQPGWSGHYCNESCPAGYYGNGCQLPCTCQNGADCHSITGSCTCAPGFMGEVCAVPCAAGTYGPNCSSVCSCSNGGTCSPVDGSCTCREGWQGLDCSLPCPSGTWGLNCNETCICANGAACSPFDGSCACTPGWLGDSCELPCPDGTFGLNCSEHCDCSHADGCDPVTGHCCCLAGWTGIRCDSTCPPGRWGPNCSVSCSCENGGSCSPEDGSCECAPGFRGPLCQRICPPGFYGHGCAQPCPLCVHSRGPCHHISGICECLPGFSGALCNQVCAGGHFGQDCAQLCSCANNGTCSPIDGSCQCFPGWIGKDCSQACPSGFWGSACFHTCSCHNGASCSAEDGACHCTPGWTGLFCTQRCPSAFFGKDCGHICQCQNGASCDHITGKCTCRTGFSGRHCEQRCAPGTFGYGCQQLCECMNNATCDHVTGTCYCSPGFKGIRCDQAALMMDELNPYTKISPALGAERHSVGAVTGIVLLLFLVVVLLGLFAWRRRRQKEKGRDLAPRVSYTPAMRMTSTDYSLSDLSQSSSHAQCFSNASYHTLACGGPATSQASTLDRNSPTKLSNKSLDRDTAGWTPYSYVNVLDSHFQISALEARYPPEDFYIELRHLSRHAEPHSPGTCGMDRRQNTYIMDKGFKDYMKESVCSSSTCSLNSSENPYATIKDPPILTCKLPESSYVEMKSPVHLGSPYTDVPSLSTSNKNIYEVGRCLT</sequence>
<name>MEG11_MOUSE</name>
<keyword id="KW-0025">Alternative splicing</keyword>
<keyword id="KW-1003">Cell membrane</keyword>
<keyword id="KW-1015">Disulfide bond</keyword>
<keyword id="KW-0245">EGF-like domain</keyword>
<keyword id="KW-0325">Glycoprotein</keyword>
<keyword id="KW-0472">Membrane</keyword>
<keyword id="KW-1185">Reference proteome</keyword>
<keyword id="KW-0677">Repeat</keyword>
<keyword id="KW-0732">Signal</keyword>
<keyword id="KW-0812">Transmembrane</keyword>
<keyword id="KW-1133">Transmembrane helix</keyword>
<evidence type="ECO:0000250" key="1"/>
<evidence type="ECO:0000255" key="2"/>
<evidence type="ECO:0000255" key="3">
    <source>
        <dbReference type="PROSITE-ProRule" id="PRU00076"/>
    </source>
</evidence>
<evidence type="ECO:0000255" key="4">
    <source>
        <dbReference type="PROSITE-ProRule" id="PRU00384"/>
    </source>
</evidence>
<evidence type="ECO:0000269" key="5">
    <source>
    </source>
</evidence>
<evidence type="ECO:0000303" key="6">
    <source>
    </source>
</evidence>
<evidence type="ECO:0000305" key="7"/>
<dbReference type="EMBL" id="AK122555">
    <property type="protein sequence ID" value="BAC65837.2"/>
    <property type="status" value="ALT_INIT"/>
    <property type="molecule type" value="mRNA"/>
</dbReference>
<dbReference type="EMBL" id="AK048840">
    <property type="protein sequence ID" value="BAC33471.1"/>
    <property type="molecule type" value="mRNA"/>
</dbReference>
<dbReference type="EMBL" id="AK051642">
    <property type="protein sequence ID" value="BAC34702.1"/>
    <property type="molecule type" value="mRNA"/>
</dbReference>
<dbReference type="EMBL" id="AK160406">
    <property type="protein sequence ID" value="BAE35774.1"/>
    <property type="molecule type" value="mRNA"/>
</dbReference>
<dbReference type="CCDS" id="CCDS23281.1">
    <molecule id="Q80T91-2"/>
</dbReference>
<dbReference type="RefSeq" id="NP_001127871.1">
    <property type="nucleotide sequence ID" value="NM_001134399.1"/>
</dbReference>
<dbReference type="RefSeq" id="NP_001395543.1">
    <molecule id="Q80T91-1"/>
    <property type="nucleotide sequence ID" value="NM_001408614.1"/>
</dbReference>
<dbReference type="RefSeq" id="NP_001395548.1">
    <molecule id="Q80T91-4"/>
    <property type="nucleotide sequence ID" value="NM_001408619.1"/>
</dbReference>
<dbReference type="RefSeq" id="NP_766110.3">
    <molecule id="Q80T91-2"/>
    <property type="nucleotide sequence ID" value="NM_172522.5"/>
</dbReference>
<dbReference type="RefSeq" id="XP_006511052.1">
    <property type="nucleotide sequence ID" value="XM_006510989.1"/>
</dbReference>
<dbReference type="RefSeq" id="XP_036010680.1">
    <molecule id="Q80T91-4"/>
    <property type="nucleotide sequence ID" value="XM_036154787.1"/>
</dbReference>
<dbReference type="SMR" id="Q80T91"/>
<dbReference type="FunCoup" id="Q80T91">
    <property type="interactions" value="7"/>
</dbReference>
<dbReference type="STRING" id="10090.ENSMUSP00000128672"/>
<dbReference type="GlyCosmos" id="Q80T91">
    <property type="glycosylation" value="2 sites, No reported glycans"/>
</dbReference>
<dbReference type="GlyGen" id="Q80T91">
    <property type="glycosylation" value="2 sites"/>
</dbReference>
<dbReference type="iPTMnet" id="Q80T91"/>
<dbReference type="PhosphoSitePlus" id="Q80T91"/>
<dbReference type="ProteomicsDB" id="292293">
    <molecule id="Q80T91-1"/>
</dbReference>
<dbReference type="ProteomicsDB" id="292294">
    <molecule id="Q80T91-2"/>
</dbReference>
<dbReference type="ProteomicsDB" id="292295">
    <molecule id="Q80T91-3"/>
</dbReference>
<dbReference type="ProteomicsDB" id="292296">
    <molecule id="Q80T91-4"/>
</dbReference>
<dbReference type="Antibodypedia" id="42885">
    <property type="antibodies" value="58 antibodies from 13 providers"/>
</dbReference>
<dbReference type="DNASU" id="214058"/>
<dbReference type="Ensembl" id="ENSMUST00000068967.11">
    <molecule id="Q80T91-1"/>
    <property type="protein sequence ID" value="ENSMUSP00000065353.5"/>
    <property type="gene ID" value="ENSMUSG00000036466.18"/>
</dbReference>
<dbReference type="Ensembl" id="ENSMUST00000093829.9">
    <molecule id="Q80T91-2"/>
    <property type="protein sequence ID" value="ENSMUSP00000091349.3"/>
    <property type="gene ID" value="ENSMUSG00000036466.18"/>
</dbReference>
<dbReference type="Ensembl" id="ENSMUST00000118485.8">
    <molecule id="Q80T91-4"/>
    <property type="protein sequence ID" value="ENSMUSP00000114035.2"/>
    <property type="gene ID" value="ENSMUSG00000036466.18"/>
</dbReference>
<dbReference type="GeneID" id="214058"/>
<dbReference type="KEGG" id="mmu:214058"/>
<dbReference type="UCSC" id="uc009qby.2">
    <molecule id="Q80T91-3"/>
    <property type="organism name" value="mouse"/>
</dbReference>
<dbReference type="UCSC" id="uc009qbz.2">
    <molecule id="Q80T91-2"/>
    <property type="organism name" value="mouse"/>
</dbReference>
<dbReference type="UCSC" id="uc009qca.2">
    <molecule id="Q80T91-1"/>
    <property type="organism name" value="mouse"/>
</dbReference>
<dbReference type="AGR" id="MGI:1920951"/>
<dbReference type="CTD" id="84465"/>
<dbReference type="MGI" id="MGI:1920951">
    <property type="gene designation" value="Megf11"/>
</dbReference>
<dbReference type="VEuPathDB" id="HostDB:ENSMUSG00000036466"/>
<dbReference type="GeneTree" id="ENSGT00940000155333"/>
<dbReference type="HOGENOM" id="CLU_008281_0_0_1"/>
<dbReference type="InParanoid" id="Q80T91"/>
<dbReference type="OMA" id="CPCNVTN"/>
<dbReference type="OrthoDB" id="409374at2759"/>
<dbReference type="PhylomeDB" id="Q80T91"/>
<dbReference type="TreeFam" id="TF332598"/>
<dbReference type="BioGRID-ORCS" id="214058">
    <property type="hits" value="1 hit in 59 CRISPR screens"/>
</dbReference>
<dbReference type="ChiTaRS" id="Megf11">
    <property type="organism name" value="mouse"/>
</dbReference>
<dbReference type="PRO" id="PR:Q80T91"/>
<dbReference type="Proteomes" id="UP000000589">
    <property type="component" value="Chromosome 9"/>
</dbReference>
<dbReference type="RNAct" id="Q80T91">
    <property type="molecule type" value="protein"/>
</dbReference>
<dbReference type="Bgee" id="ENSMUSG00000036466">
    <property type="expression patterns" value="Expressed in cerebellum lobe and 138 other cell types or tissues"/>
</dbReference>
<dbReference type="ExpressionAtlas" id="Q80T91">
    <property type="expression patterns" value="baseline and differential"/>
</dbReference>
<dbReference type="GO" id="GO:0016323">
    <property type="term" value="C:basolateral plasma membrane"/>
    <property type="evidence" value="ECO:0007669"/>
    <property type="project" value="UniProtKB-SubCell"/>
</dbReference>
<dbReference type="GO" id="GO:0005044">
    <property type="term" value="F:scavenger receptor activity"/>
    <property type="evidence" value="ECO:0007669"/>
    <property type="project" value="InterPro"/>
</dbReference>
<dbReference type="GO" id="GO:0034109">
    <property type="term" value="P:homotypic cell-cell adhesion"/>
    <property type="evidence" value="ECO:0000314"/>
    <property type="project" value="UniProtKB"/>
</dbReference>
<dbReference type="GO" id="GO:0010842">
    <property type="term" value="P:retina layer formation"/>
    <property type="evidence" value="ECO:0000315"/>
    <property type="project" value="UniProtKB"/>
</dbReference>
<dbReference type="FunFam" id="2.170.300.10:FF:000007">
    <property type="entry name" value="multiple epidermal growth factor-like domains protein 10"/>
    <property type="match status" value="1"/>
</dbReference>
<dbReference type="FunFam" id="2.10.25.10:FF:000114">
    <property type="entry name" value="Multiple epidermal growth factor-like domains protein 11"/>
    <property type="match status" value="1"/>
</dbReference>
<dbReference type="FunFam" id="2.170.300.10:FF:000006">
    <property type="entry name" value="Multiple epidermal growth factor-like domains protein 11"/>
    <property type="match status" value="1"/>
</dbReference>
<dbReference type="FunFam" id="2.170.300.10:FF:000005">
    <property type="entry name" value="multiple epidermal growth factor-like domains protein 11"/>
    <property type="match status" value="1"/>
</dbReference>
<dbReference type="FunFam" id="2.170.300.10:FF:000015">
    <property type="entry name" value="multiple epidermal growth factor-like domains protein 11 isoform X3"/>
    <property type="match status" value="1"/>
</dbReference>
<dbReference type="Gene3D" id="2.10.25.10">
    <property type="entry name" value="Laminin"/>
    <property type="match status" value="2"/>
</dbReference>
<dbReference type="Gene3D" id="2.170.300.10">
    <property type="entry name" value="Tie2 ligand-binding domain superfamily"/>
    <property type="match status" value="4"/>
</dbReference>
<dbReference type="InterPro" id="IPR013032">
    <property type="entry name" value="EGF-like_CS"/>
</dbReference>
<dbReference type="InterPro" id="IPR000742">
    <property type="entry name" value="EGF-like_dom"/>
</dbReference>
<dbReference type="InterPro" id="IPR057138">
    <property type="entry name" value="EGF_PEAR1L-like"/>
</dbReference>
<dbReference type="InterPro" id="IPR011489">
    <property type="entry name" value="EMI_domain"/>
</dbReference>
<dbReference type="InterPro" id="IPR002049">
    <property type="entry name" value="LE_dom"/>
</dbReference>
<dbReference type="InterPro" id="IPR042635">
    <property type="entry name" value="MEGF10/SREC1/2-like"/>
</dbReference>
<dbReference type="PANTHER" id="PTHR24043:SF9">
    <property type="entry name" value="MULTIPLE EGF LIKE DOMAINS 11"/>
    <property type="match status" value="1"/>
</dbReference>
<dbReference type="PANTHER" id="PTHR24043">
    <property type="entry name" value="SCAVENGER RECEPTOR CLASS F"/>
    <property type="match status" value="1"/>
</dbReference>
<dbReference type="Pfam" id="PF00053">
    <property type="entry name" value="EGF_laminin"/>
    <property type="match status" value="7"/>
</dbReference>
<dbReference type="Pfam" id="PF23301">
    <property type="entry name" value="EGF_PEAR1L"/>
    <property type="match status" value="1"/>
</dbReference>
<dbReference type="Pfam" id="PF23106">
    <property type="entry name" value="EGF_Teneurin"/>
    <property type="match status" value="1"/>
</dbReference>
<dbReference type="Pfam" id="PF12661">
    <property type="entry name" value="hEGF"/>
    <property type="match status" value="3"/>
</dbReference>
<dbReference type="PRINTS" id="PR00011">
    <property type="entry name" value="EGFLAMININ"/>
</dbReference>
<dbReference type="SMART" id="SM00181">
    <property type="entry name" value="EGF"/>
    <property type="match status" value="17"/>
</dbReference>
<dbReference type="SMART" id="SM00180">
    <property type="entry name" value="EGF_Lam"/>
    <property type="match status" value="16"/>
</dbReference>
<dbReference type="PROSITE" id="PS00022">
    <property type="entry name" value="EGF_1"/>
    <property type="match status" value="17"/>
</dbReference>
<dbReference type="PROSITE" id="PS01186">
    <property type="entry name" value="EGF_2"/>
    <property type="match status" value="17"/>
</dbReference>
<dbReference type="PROSITE" id="PS50026">
    <property type="entry name" value="EGF_3"/>
    <property type="match status" value="15"/>
</dbReference>
<dbReference type="PROSITE" id="PS51041">
    <property type="entry name" value="EMI"/>
    <property type="match status" value="1"/>
</dbReference>
<feature type="signal peptide" evidence="2">
    <location>
        <begin position="1"/>
        <end position="18"/>
    </location>
</feature>
<feature type="chain" id="PRO_0000309736" description="Multiple epidermal growth factor-like domains protein 11">
    <location>
        <begin position="19"/>
        <end position="1091"/>
    </location>
</feature>
<feature type="topological domain" description="Extracellular" evidence="2">
    <location>
        <begin position="19"/>
        <end position="847"/>
    </location>
</feature>
<feature type="transmembrane region" description="Helical" evidence="2">
    <location>
        <begin position="848"/>
        <end position="868"/>
    </location>
</feature>
<feature type="topological domain" description="Cytoplasmic" evidence="2">
    <location>
        <begin position="869"/>
        <end position="1091"/>
    </location>
</feature>
<feature type="domain" description="EMI" evidence="4">
    <location>
        <begin position="23"/>
        <end position="100"/>
    </location>
</feature>
<feature type="domain" description="EGF-like 1" evidence="3">
    <location>
        <begin position="94"/>
        <end position="129"/>
    </location>
</feature>
<feature type="domain" description="EGF-like 2" evidence="3">
    <location>
        <begin position="142"/>
        <end position="172"/>
    </location>
</feature>
<feature type="domain" description="EGF-like 3" evidence="3">
    <location>
        <begin position="180"/>
        <end position="215"/>
    </location>
</feature>
<feature type="domain" description="EGF-like 4" evidence="3">
    <location>
        <begin position="223"/>
        <end position="258"/>
    </location>
</feature>
<feature type="domain" description="EGF-like 5" evidence="3">
    <location>
        <begin position="266"/>
        <end position="301"/>
    </location>
</feature>
<feature type="domain" description="EGF-like 6" evidence="3">
    <location>
        <begin position="314"/>
        <end position="344"/>
    </location>
</feature>
<feature type="domain" description="EGF-like 7" evidence="3">
    <location>
        <begin position="398"/>
        <end position="433"/>
    </location>
</feature>
<feature type="domain" description="EGF-like 8" evidence="3">
    <location>
        <begin position="441"/>
        <end position="476"/>
    </location>
</feature>
<feature type="domain" description="EGF-like 9" evidence="3">
    <location>
        <begin position="484"/>
        <end position="519"/>
    </location>
</feature>
<feature type="domain" description="EGF-like 10" evidence="3">
    <location>
        <begin position="570"/>
        <end position="605"/>
    </location>
</feature>
<feature type="domain" description="EGF-like 11" evidence="3">
    <location>
        <begin position="613"/>
        <end position="650"/>
    </location>
</feature>
<feature type="domain" description="EGF-like 12" evidence="3">
    <location>
        <begin position="658"/>
        <end position="693"/>
    </location>
</feature>
<feature type="domain" description="EGF-like 13" evidence="3">
    <location>
        <begin position="706"/>
        <end position="736"/>
    </location>
</feature>
<feature type="domain" description="EGF-like 14" evidence="3">
    <location>
        <begin position="749"/>
        <end position="779"/>
    </location>
</feature>
<feature type="domain" description="EGF-like 15" evidence="3">
    <location>
        <begin position="787"/>
        <end position="822"/>
    </location>
</feature>
<feature type="glycosylation site" description="N-linked (GlcNAc...) asparagine" evidence="2">
    <location>
        <position position="269"/>
    </location>
</feature>
<feature type="glycosylation site" description="N-linked (GlcNAc...) asparagine" evidence="2">
    <location>
        <position position="530"/>
    </location>
</feature>
<feature type="disulfide bond" evidence="2">
    <location>
        <begin position="27"/>
        <end position="88"/>
    </location>
</feature>
<feature type="disulfide bond" evidence="2">
    <location>
        <begin position="53"/>
        <end position="62"/>
    </location>
</feature>
<feature type="disulfide bond" evidence="2">
    <location>
        <begin position="87"/>
        <end position="98"/>
    </location>
</feature>
<feature type="disulfide bond" evidence="1">
    <location>
        <begin position="102"/>
        <end position="117"/>
    </location>
</feature>
<feature type="disulfide bond" evidence="1">
    <location>
        <begin position="119"/>
        <end position="128"/>
    </location>
</feature>
<feature type="disulfide bond" evidence="1">
    <location>
        <begin position="145"/>
        <end position="153"/>
    </location>
</feature>
<feature type="disulfide bond" evidence="1">
    <location>
        <begin position="147"/>
        <end position="160"/>
    </location>
</feature>
<feature type="disulfide bond" evidence="1">
    <location>
        <begin position="162"/>
        <end position="171"/>
    </location>
</feature>
<feature type="disulfide bond" evidence="1">
    <location>
        <begin position="184"/>
        <end position="196"/>
    </location>
</feature>
<feature type="disulfide bond" evidence="1">
    <location>
        <begin position="190"/>
        <end position="203"/>
    </location>
</feature>
<feature type="disulfide bond" evidence="1">
    <location>
        <begin position="205"/>
        <end position="214"/>
    </location>
</feature>
<feature type="disulfide bond" evidence="1">
    <location>
        <begin position="227"/>
        <end position="239"/>
    </location>
</feature>
<feature type="disulfide bond" evidence="1">
    <location>
        <begin position="233"/>
        <end position="246"/>
    </location>
</feature>
<feature type="disulfide bond" evidence="1">
    <location>
        <begin position="248"/>
        <end position="257"/>
    </location>
</feature>
<feature type="disulfide bond" evidence="1">
    <location>
        <begin position="270"/>
        <end position="282"/>
    </location>
</feature>
<feature type="disulfide bond" evidence="1">
    <location>
        <begin position="276"/>
        <end position="289"/>
    </location>
</feature>
<feature type="disulfide bond" evidence="1">
    <location>
        <begin position="291"/>
        <end position="300"/>
    </location>
</feature>
<feature type="disulfide bond" evidence="1">
    <location>
        <begin position="317"/>
        <end position="325"/>
    </location>
</feature>
<feature type="disulfide bond" evidence="1">
    <location>
        <begin position="319"/>
        <end position="332"/>
    </location>
</feature>
<feature type="disulfide bond" evidence="1">
    <location>
        <begin position="334"/>
        <end position="343"/>
    </location>
</feature>
<feature type="disulfide bond" evidence="1">
    <location>
        <begin position="402"/>
        <end position="414"/>
    </location>
</feature>
<feature type="disulfide bond" evidence="1">
    <location>
        <begin position="408"/>
        <end position="421"/>
    </location>
</feature>
<feature type="disulfide bond" evidence="1">
    <location>
        <begin position="423"/>
        <end position="432"/>
    </location>
</feature>
<feature type="disulfide bond" evidence="1">
    <location>
        <begin position="445"/>
        <end position="457"/>
    </location>
</feature>
<feature type="disulfide bond" evidence="1">
    <location>
        <begin position="451"/>
        <end position="464"/>
    </location>
</feature>
<feature type="disulfide bond" evidence="1">
    <location>
        <begin position="466"/>
        <end position="475"/>
    </location>
</feature>
<feature type="disulfide bond" evidence="1">
    <location>
        <begin position="488"/>
        <end position="500"/>
    </location>
</feature>
<feature type="disulfide bond" evidence="1">
    <location>
        <begin position="494"/>
        <end position="507"/>
    </location>
</feature>
<feature type="disulfide bond" evidence="1">
    <location>
        <begin position="509"/>
        <end position="518"/>
    </location>
</feature>
<feature type="disulfide bond" evidence="1">
    <location>
        <begin position="574"/>
        <end position="586"/>
    </location>
</feature>
<feature type="disulfide bond" evidence="1">
    <location>
        <begin position="580"/>
        <end position="593"/>
    </location>
</feature>
<feature type="disulfide bond" evidence="1">
    <location>
        <begin position="595"/>
        <end position="604"/>
    </location>
</feature>
<feature type="disulfide bond" evidence="1">
    <location>
        <begin position="617"/>
        <end position="631"/>
    </location>
</feature>
<feature type="disulfide bond" evidence="1">
    <location>
        <begin position="621"/>
        <end position="638"/>
    </location>
</feature>
<feature type="disulfide bond" evidence="1">
    <location>
        <begin position="640"/>
        <end position="649"/>
    </location>
</feature>
<feature type="disulfide bond" evidence="1">
    <location>
        <begin position="662"/>
        <end position="674"/>
    </location>
</feature>
<feature type="disulfide bond" evidence="1">
    <location>
        <begin position="668"/>
        <end position="681"/>
    </location>
</feature>
<feature type="disulfide bond" evidence="1">
    <location>
        <begin position="683"/>
        <end position="692"/>
    </location>
</feature>
<feature type="disulfide bond" evidence="1">
    <location>
        <begin position="709"/>
        <end position="717"/>
    </location>
</feature>
<feature type="disulfide bond" evidence="1">
    <location>
        <begin position="711"/>
        <end position="724"/>
    </location>
</feature>
<feature type="disulfide bond" evidence="1">
    <location>
        <begin position="726"/>
        <end position="735"/>
    </location>
</feature>
<feature type="disulfide bond" evidence="1">
    <location>
        <begin position="752"/>
        <end position="760"/>
    </location>
</feature>
<feature type="disulfide bond" evidence="1">
    <location>
        <begin position="754"/>
        <end position="767"/>
    </location>
</feature>
<feature type="disulfide bond" evidence="1">
    <location>
        <begin position="769"/>
        <end position="778"/>
    </location>
</feature>
<feature type="disulfide bond" evidence="1">
    <location>
        <begin position="791"/>
        <end position="803"/>
    </location>
</feature>
<feature type="disulfide bond" evidence="1">
    <location>
        <begin position="797"/>
        <end position="810"/>
    </location>
</feature>
<feature type="disulfide bond" evidence="1">
    <location>
        <begin position="812"/>
        <end position="821"/>
    </location>
</feature>
<feature type="splice variant" id="VSP_029253" description="In isoform 2." evidence="6">
    <original>PLCTEECMHGRCVSPDTCHCEPGWGGPDCSSG</original>
    <variation>R</variation>
    <location>
        <begin position="100"/>
        <end position="131"/>
    </location>
</feature>
<feature type="splice variant" id="VSP_029254" description="In isoform 3." evidence="6">
    <location>
        <begin position="300"/>
        <end position="1091"/>
    </location>
</feature>
<feature type="splice variant" id="VSP_029255" description="In isoform 2." evidence="6">
    <original>ACPSGFWGSACFHTCSCHNGASCSAEDGACHCTPGWTGLFCTQR</original>
    <variation>G</variation>
    <location>
        <begin position="695"/>
        <end position="738"/>
    </location>
</feature>
<feature type="splice variant" id="VSP_029256" description="In isoform 4." evidence="6">
    <location>
        <begin position="903"/>
        <end position="998"/>
    </location>
</feature>
<feature type="splice variant" id="VSP_029257" description="In isoform 2." evidence="6">
    <original>DYMK</original>
    <variation>VAPA</variation>
    <location>
        <begin position="1018"/>
        <end position="1021"/>
    </location>
</feature>
<feature type="splice variant" id="VSP_029258" description="In isoform 2." evidence="6">
    <location>
        <begin position="1022"/>
        <end position="1091"/>
    </location>
</feature>
<feature type="splice variant" id="VSP_029259" description="In isoform 4." evidence="6">
    <original>GRCLT</original>
    <variation>EPTVSVVQEGRGHNSSYIQNPYDLPKNSHIPGHYDLLPVRQSPAHGPFQEKQ</variation>
    <location>
        <begin position="1087"/>
        <end position="1091"/>
    </location>
</feature>
<feature type="sequence conflict" description="In Ref. 2; BAE35774." evidence="7" ref="2">
    <original>G</original>
    <variation>E</variation>
    <location>
        <position position="815"/>
    </location>
</feature>
<feature type="sequence conflict" description="In Ref. 2; BAE35774." evidence="7" ref="2">
    <original>Y</original>
    <variation>C</variation>
    <location>
        <position position="1057"/>
    </location>
</feature>
<proteinExistence type="evidence at protein level"/>
<gene>
    <name type="primary">Megf11</name>
    <name type="synonym">Kiaa1781</name>
</gene>
<comment type="function">
    <text evidence="5">May regulate the mosaic spacing of specific neuron subtypes in the retina through homotypic retinal neuron repulsion. Mosaics provide a mechanism to distribute each cell type evenly across the retina, ensuring that all parts of the visual field have access to a full set of processing elements.</text>
</comment>
<comment type="subunit">
    <text evidence="1">Homomer. Does not interact with MEGF10.</text>
</comment>
<comment type="subcellular location">
    <subcellularLocation>
        <location evidence="1">Cell membrane</location>
        <topology evidence="1">Single-pass type I membrane protein</topology>
    </subcellularLocation>
    <subcellularLocation>
        <location evidence="1">Basolateral cell membrane</location>
        <topology evidence="1">Single-pass type I membrane protein</topology>
    </subcellularLocation>
    <text evidence="1">Forms an irregular, mosaic-like adhesion pattern in region of the cell that becomes firmely fixed to the substrate. Localized to protruding lamellipodia. Does not localize with MEGF10 (By similarity).</text>
</comment>
<comment type="alternative products">
    <event type="alternative splicing"/>
    <isoform>
        <id>Q80T91-1</id>
        <name>1</name>
        <sequence type="displayed"/>
    </isoform>
    <isoform>
        <id>Q80T91-2</id>
        <name>2</name>
        <sequence type="described" ref="VSP_029253 VSP_029255 VSP_029257 VSP_029258"/>
    </isoform>
    <isoform>
        <id>Q80T91-3</id>
        <name>3</name>
        <sequence type="described" ref="VSP_029254"/>
    </isoform>
    <isoform>
        <id>Q80T91-4</id>
        <name>4</name>
        <sequence type="described" ref="VSP_029256 VSP_029259"/>
    </isoform>
</comment>
<comment type="similarity">
    <text evidence="7">Belongs to the MEGF family.</text>
</comment>
<comment type="sequence caution" evidence="7">
    <conflict type="erroneous initiation">
        <sequence resource="EMBL-CDS" id="BAC65837"/>
    </conflict>
    <text>Extended N-terminus.</text>
</comment>
<accession>Q80T91</accession>
<accession>Q3TV46</accession>
<accession>Q8BKK7</accession>
<accession>Q8BX64</accession>